<dbReference type="EMBL" id="CR848445">
    <property type="protein sequence ID" value="CAJ81341.1"/>
    <property type="molecule type" value="mRNA"/>
</dbReference>
<dbReference type="EMBL" id="BC158908">
    <property type="protein sequence ID" value="AAI58909.1"/>
    <property type="molecule type" value="mRNA"/>
</dbReference>
<dbReference type="EMBL" id="BC167283">
    <property type="protein sequence ID" value="AAI67283.1"/>
    <property type="molecule type" value="mRNA"/>
</dbReference>
<dbReference type="FunCoup" id="Q28E54">
    <property type="interactions" value="2145"/>
</dbReference>
<dbReference type="PaxDb" id="8364-ENSXETP00000006724"/>
<dbReference type="KEGG" id="xtr:548713"/>
<dbReference type="AGR" id="Xenbase:XB-GENE-975905"/>
<dbReference type="CTD" id="100155842"/>
<dbReference type="Xenbase" id="XB-GENE-975905">
    <property type="gene designation" value="c4h1orf52"/>
</dbReference>
<dbReference type="eggNOG" id="ENOG502QVJV">
    <property type="taxonomic scope" value="Eukaryota"/>
</dbReference>
<dbReference type="HOGENOM" id="CLU_127170_0_0_1"/>
<dbReference type="InParanoid" id="Q28E54"/>
<dbReference type="OMA" id="PPKECKI"/>
<dbReference type="OrthoDB" id="1906229at2759"/>
<dbReference type="PhylomeDB" id="Q28E54"/>
<dbReference type="TreeFam" id="TF333299"/>
<dbReference type="Proteomes" id="UP000008143">
    <property type="component" value="Chromosome 4"/>
</dbReference>
<dbReference type="ExpressionAtlas" id="Q28E54">
    <property type="expression patterns" value="baseline"/>
</dbReference>
<dbReference type="InterPro" id="IPR029089">
    <property type="entry name" value="DUF4660"/>
</dbReference>
<dbReference type="PANTHER" id="PTHR31833">
    <property type="entry name" value="UPF0690 PROTEIN C1ORF52"/>
    <property type="match status" value="1"/>
</dbReference>
<dbReference type="PANTHER" id="PTHR31833:SF2">
    <property type="entry name" value="UPF0690 PROTEIN C1ORF52"/>
    <property type="match status" value="1"/>
</dbReference>
<dbReference type="Pfam" id="PF15559">
    <property type="entry name" value="DUF4660"/>
    <property type="match status" value="1"/>
</dbReference>
<proteinExistence type="evidence at transcript level"/>
<organism>
    <name type="scientific">Xenopus tropicalis</name>
    <name type="common">Western clawed frog</name>
    <name type="synonym">Silurana tropicalis</name>
    <dbReference type="NCBI Taxonomy" id="8364"/>
    <lineage>
        <taxon>Eukaryota</taxon>
        <taxon>Metazoa</taxon>
        <taxon>Chordata</taxon>
        <taxon>Craniata</taxon>
        <taxon>Vertebrata</taxon>
        <taxon>Euteleostomi</taxon>
        <taxon>Amphibia</taxon>
        <taxon>Batrachia</taxon>
        <taxon>Anura</taxon>
        <taxon>Pipoidea</taxon>
        <taxon>Pipidae</taxon>
        <taxon>Xenopodinae</taxon>
        <taxon>Xenopus</taxon>
        <taxon>Silurana</taxon>
    </lineage>
</organism>
<sequence length="170" mass="19353">MAAEEKDPLSYFAAYGSSSSDSESSDEEKEAERSKNRSIKRPFPTDTKKLPGPDELFRNVSRPAFLYNPLNKQIDWESRVKRAPEEPPKEFKVWKTNAVPPPESYQVAEKKAPPPELDMAIKWSNVYQDNGDDAPHANQAKSLEEEEAREDSPPSDDEQEKAFAIKKRKV</sequence>
<gene>
    <name type="ORF">TEgg012e12.1</name>
</gene>
<feature type="chain" id="PRO_0000359777" description="UPF0690 protein C1orf52 homolog">
    <location>
        <begin position="1"/>
        <end position="170"/>
    </location>
</feature>
<feature type="region of interest" description="Disordered" evidence="1">
    <location>
        <begin position="1"/>
        <end position="56"/>
    </location>
</feature>
<feature type="region of interest" description="Disordered" evidence="1">
    <location>
        <begin position="124"/>
        <end position="170"/>
    </location>
</feature>
<feature type="compositionally biased region" description="Basic and acidic residues" evidence="1">
    <location>
        <begin position="46"/>
        <end position="56"/>
    </location>
</feature>
<feature type="compositionally biased region" description="Acidic residues" evidence="1">
    <location>
        <begin position="144"/>
        <end position="159"/>
    </location>
</feature>
<protein>
    <recommendedName>
        <fullName>UPF0690 protein C1orf52 homolog</fullName>
    </recommendedName>
</protein>
<comment type="similarity">
    <text evidence="2">Belongs to the UPF0690 family.</text>
</comment>
<reference key="1">
    <citation type="submission" date="2006-10" db="EMBL/GenBank/DDBJ databases">
        <authorList>
            <consortium name="Sanger Xenopus tropicalis EST/cDNA project"/>
        </authorList>
    </citation>
    <scope>NUCLEOTIDE SEQUENCE [LARGE SCALE MRNA]</scope>
    <source>
        <tissue>Neurula</tissue>
    </source>
</reference>
<reference key="2">
    <citation type="submission" date="2008-06" db="EMBL/GenBank/DDBJ databases">
        <authorList>
            <consortium name="NIH - Xenopus Gene Collection (XGC) project"/>
        </authorList>
    </citation>
    <scope>NUCLEOTIDE SEQUENCE [LARGE SCALE MRNA]</scope>
    <source>
        <tissue>Gastrula</tissue>
    </source>
</reference>
<name>CA052_XENTR</name>
<keyword id="KW-1185">Reference proteome</keyword>
<accession>Q28E54</accession>
<evidence type="ECO:0000256" key="1">
    <source>
        <dbReference type="SAM" id="MobiDB-lite"/>
    </source>
</evidence>
<evidence type="ECO:0000305" key="2"/>